<proteinExistence type="inferred from homology"/>
<reference key="1">
    <citation type="journal article" date="2009" name="Stand. Genomic Sci.">
        <title>Complete genome sequence of Methanocorpusculum labreanum type strain Z.</title>
        <authorList>
            <person name="Anderson I.J."/>
            <person name="Sieprawska-Lupa M."/>
            <person name="Goltsman E."/>
            <person name="Lapidus A."/>
            <person name="Copeland A."/>
            <person name="Glavina Del Rio T."/>
            <person name="Tice H."/>
            <person name="Dalin E."/>
            <person name="Barry K."/>
            <person name="Pitluck S."/>
            <person name="Hauser L."/>
            <person name="Land M."/>
            <person name="Lucas S."/>
            <person name="Richardson P."/>
            <person name="Whitman W.B."/>
            <person name="Kyrpides N.C."/>
        </authorList>
    </citation>
    <scope>NUCLEOTIDE SEQUENCE [LARGE SCALE GENOMIC DNA]</scope>
    <source>
        <strain>ATCC 43576 / DSM 4855 / Z</strain>
    </source>
</reference>
<evidence type="ECO:0000255" key="1">
    <source>
        <dbReference type="HAMAP-Rule" id="MF_00089"/>
    </source>
</evidence>
<dbReference type="EC" id="4.1.99.17" evidence="1"/>
<dbReference type="EMBL" id="CP000559">
    <property type="protein sequence ID" value="ABN07872.1"/>
    <property type="molecule type" value="Genomic_DNA"/>
</dbReference>
<dbReference type="RefSeq" id="WP_011834075.1">
    <property type="nucleotide sequence ID" value="NC_008942.1"/>
</dbReference>
<dbReference type="SMR" id="A2SU66"/>
<dbReference type="STRING" id="410358.Mlab_1711"/>
<dbReference type="GeneID" id="4795839"/>
<dbReference type="KEGG" id="mla:Mlab_1711"/>
<dbReference type="eggNOG" id="arCOG02741">
    <property type="taxonomic scope" value="Archaea"/>
</dbReference>
<dbReference type="HOGENOM" id="CLU_013181_2_2_2"/>
<dbReference type="OrthoDB" id="335406at2157"/>
<dbReference type="UniPathway" id="UPA00060"/>
<dbReference type="Proteomes" id="UP000000365">
    <property type="component" value="Chromosome"/>
</dbReference>
<dbReference type="GO" id="GO:0051539">
    <property type="term" value="F:4 iron, 4 sulfur cluster binding"/>
    <property type="evidence" value="ECO:0007669"/>
    <property type="project" value="UniProtKB-KW"/>
</dbReference>
<dbReference type="GO" id="GO:0016830">
    <property type="term" value="F:carbon-carbon lyase activity"/>
    <property type="evidence" value="ECO:0007669"/>
    <property type="project" value="InterPro"/>
</dbReference>
<dbReference type="GO" id="GO:0008270">
    <property type="term" value="F:zinc ion binding"/>
    <property type="evidence" value="ECO:0007669"/>
    <property type="project" value="UniProtKB-UniRule"/>
</dbReference>
<dbReference type="GO" id="GO:0009228">
    <property type="term" value="P:thiamine biosynthetic process"/>
    <property type="evidence" value="ECO:0007669"/>
    <property type="project" value="UniProtKB-KW"/>
</dbReference>
<dbReference type="GO" id="GO:0009229">
    <property type="term" value="P:thiamine diphosphate biosynthetic process"/>
    <property type="evidence" value="ECO:0007669"/>
    <property type="project" value="UniProtKB-UniRule"/>
</dbReference>
<dbReference type="Gene3D" id="3.20.20.540">
    <property type="entry name" value="Radical SAM ThiC family, central domain"/>
    <property type="match status" value="1"/>
</dbReference>
<dbReference type="HAMAP" id="MF_00089">
    <property type="entry name" value="ThiC"/>
    <property type="match status" value="1"/>
</dbReference>
<dbReference type="InterPro" id="IPR037509">
    <property type="entry name" value="ThiC"/>
</dbReference>
<dbReference type="InterPro" id="IPR038521">
    <property type="entry name" value="ThiC/Bza_core_dom"/>
</dbReference>
<dbReference type="InterPro" id="IPR002817">
    <property type="entry name" value="ThiC/BzaA/B"/>
</dbReference>
<dbReference type="NCBIfam" id="NF009895">
    <property type="entry name" value="PRK13352.1"/>
    <property type="match status" value="1"/>
</dbReference>
<dbReference type="NCBIfam" id="TIGR00190">
    <property type="entry name" value="thiC"/>
    <property type="match status" value="1"/>
</dbReference>
<dbReference type="PANTHER" id="PTHR30557:SF1">
    <property type="entry name" value="PHOSPHOMETHYLPYRIMIDINE SYNTHASE, CHLOROPLASTIC"/>
    <property type="match status" value="1"/>
</dbReference>
<dbReference type="PANTHER" id="PTHR30557">
    <property type="entry name" value="THIAMINE BIOSYNTHESIS PROTEIN THIC"/>
    <property type="match status" value="1"/>
</dbReference>
<dbReference type="Pfam" id="PF01964">
    <property type="entry name" value="ThiC_Rad_SAM"/>
    <property type="match status" value="1"/>
</dbReference>
<dbReference type="SFLD" id="SFLDF00407">
    <property type="entry name" value="phosphomethylpyrimidine_syntha"/>
    <property type="match status" value="1"/>
</dbReference>
<dbReference type="SFLD" id="SFLDG01114">
    <property type="entry name" value="phosphomethylpyrimidine_syntha"/>
    <property type="match status" value="1"/>
</dbReference>
<dbReference type="SFLD" id="SFLDS00113">
    <property type="entry name" value="Radical_SAM_Phosphomethylpyrim"/>
    <property type="match status" value="1"/>
</dbReference>
<feature type="chain" id="PRO_1000004770" description="Phosphomethylpyrimidine synthase">
    <location>
        <begin position="1"/>
        <end position="425"/>
    </location>
</feature>
<feature type="binding site" evidence="1">
    <location>
        <position position="94"/>
    </location>
    <ligand>
        <name>substrate</name>
    </ligand>
</feature>
<feature type="binding site" evidence="1">
    <location>
        <position position="123"/>
    </location>
    <ligand>
        <name>substrate</name>
    </ligand>
</feature>
<feature type="binding site" evidence="1">
    <location>
        <position position="162"/>
    </location>
    <ligand>
        <name>substrate</name>
    </ligand>
</feature>
<feature type="binding site" evidence="1">
    <location>
        <begin position="184"/>
        <end position="186"/>
    </location>
    <ligand>
        <name>substrate</name>
    </ligand>
</feature>
<feature type="binding site" evidence="1">
    <location>
        <begin position="225"/>
        <end position="228"/>
    </location>
    <ligand>
        <name>substrate</name>
    </ligand>
</feature>
<feature type="binding site" evidence="1">
    <location>
        <position position="264"/>
    </location>
    <ligand>
        <name>substrate</name>
    </ligand>
</feature>
<feature type="binding site" evidence="1">
    <location>
        <position position="268"/>
    </location>
    <ligand>
        <name>Zn(2+)</name>
        <dbReference type="ChEBI" id="CHEBI:29105"/>
    </ligand>
</feature>
<feature type="binding site" evidence="1">
    <location>
        <position position="291"/>
    </location>
    <ligand>
        <name>substrate</name>
    </ligand>
</feature>
<feature type="binding site" evidence="1">
    <location>
        <position position="332"/>
    </location>
    <ligand>
        <name>Zn(2+)</name>
        <dbReference type="ChEBI" id="CHEBI:29105"/>
    </ligand>
</feature>
<feature type="binding site" evidence="1">
    <location>
        <position position="407"/>
    </location>
    <ligand>
        <name>[4Fe-4S] cluster</name>
        <dbReference type="ChEBI" id="CHEBI:49883"/>
        <note>4Fe-4S-S-AdoMet</note>
    </ligand>
</feature>
<feature type="binding site" evidence="1">
    <location>
        <position position="410"/>
    </location>
    <ligand>
        <name>[4Fe-4S] cluster</name>
        <dbReference type="ChEBI" id="CHEBI:49883"/>
        <note>4Fe-4S-S-AdoMet</note>
    </ligand>
</feature>
<feature type="binding site" evidence="1">
    <location>
        <position position="414"/>
    </location>
    <ligand>
        <name>[4Fe-4S] cluster</name>
        <dbReference type="ChEBI" id="CHEBI:49883"/>
        <note>4Fe-4S-S-AdoMet</note>
    </ligand>
</feature>
<protein>
    <recommendedName>
        <fullName evidence="1">Phosphomethylpyrimidine synthase</fullName>
        <ecNumber evidence="1">4.1.99.17</ecNumber>
    </recommendedName>
    <alternativeName>
        <fullName evidence="1">Hydroxymethylpyrimidine phosphate synthase</fullName>
        <shortName evidence="1">HMP-P synthase</shortName>
        <shortName evidence="1">HMP-phosphate synthase</shortName>
        <shortName evidence="1">HMPP synthase</shortName>
    </alternativeName>
    <alternativeName>
        <fullName evidence="1">Thiamine biosynthesis protein ThiC</fullName>
    </alternativeName>
</protein>
<accession>A2SU66</accession>
<comment type="function">
    <text evidence="1">Catalyzes the synthesis of the hydroxymethylpyrimidine phosphate (HMP-P) moiety of thiamine from aminoimidazole ribotide (AIR) in a radical S-adenosyl-L-methionine (SAM)-dependent reaction.</text>
</comment>
<comment type="catalytic activity">
    <reaction evidence="1">
        <text>5-amino-1-(5-phospho-beta-D-ribosyl)imidazole + S-adenosyl-L-methionine = 4-amino-2-methyl-5-(phosphooxymethyl)pyrimidine + CO + 5'-deoxyadenosine + formate + L-methionine + 3 H(+)</text>
        <dbReference type="Rhea" id="RHEA:24840"/>
        <dbReference type="ChEBI" id="CHEBI:15378"/>
        <dbReference type="ChEBI" id="CHEBI:15740"/>
        <dbReference type="ChEBI" id="CHEBI:17245"/>
        <dbReference type="ChEBI" id="CHEBI:17319"/>
        <dbReference type="ChEBI" id="CHEBI:57844"/>
        <dbReference type="ChEBI" id="CHEBI:58354"/>
        <dbReference type="ChEBI" id="CHEBI:59789"/>
        <dbReference type="ChEBI" id="CHEBI:137981"/>
        <dbReference type="EC" id="4.1.99.17"/>
    </reaction>
</comment>
<comment type="cofactor">
    <cofactor evidence="1">
        <name>[4Fe-4S] cluster</name>
        <dbReference type="ChEBI" id="CHEBI:49883"/>
    </cofactor>
    <text evidence="1">Binds 1 [4Fe-4S] cluster per subunit. The cluster is coordinated with 3 cysteines and an exchangeable S-adenosyl-L-methionine.</text>
</comment>
<comment type="pathway">
    <text evidence="1">Cofactor biosynthesis; thiamine diphosphate biosynthesis.</text>
</comment>
<comment type="similarity">
    <text evidence="1">Belongs to the ThiC family.</text>
</comment>
<organism>
    <name type="scientific">Methanocorpusculum labreanum (strain ATCC 43576 / DSM 4855 / Z)</name>
    <dbReference type="NCBI Taxonomy" id="410358"/>
    <lineage>
        <taxon>Archaea</taxon>
        <taxon>Methanobacteriati</taxon>
        <taxon>Methanobacteriota</taxon>
        <taxon>Stenosarchaea group</taxon>
        <taxon>Methanomicrobia</taxon>
        <taxon>Methanomicrobiales</taxon>
        <taxon>Methanocorpusculaceae</taxon>
        <taxon>Methanocorpusculum</taxon>
    </lineage>
</organism>
<keyword id="KW-0004">4Fe-4S</keyword>
<keyword id="KW-0408">Iron</keyword>
<keyword id="KW-0411">Iron-sulfur</keyword>
<keyword id="KW-0456">Lyase</keyword>
<keyword id="KW-0479">Metal-binding</keyword>
<keyword id="KW-1185">Reference proteome</keyword>
<keyword id="KW-0949">S-adenosyl-L-methionine</keyword>
<keyword id="KW-0784">Thiamine biosynthesis</keyword>
<keyword id="KW-0862">Zinc</keyword>
<sequence>MTIVEDAKKGLITEEMKVVAKSEGVTEDFIRRGIAGGHIVIPMTPYRKVKLCGIGSGLRTKVNASIGTSSDIVNVEEELEKARQAELAGADSLMELSTGGDFLDIRRRVCEQSNLSVGSVPLYQAFIEAARNKGGVVFMDEDDLFKITEQQAKLGTNFMAIHTGINYETVKRLKNQGRHGGLVSRGGAFMTAWMLHNEMENPLYRRFDYLVEILKEHEVTLSFGNGMRAGACHDATDRAAIQELLINAELADQAHNAGVQCILEGPGHIPLDEIKTNVQLEKRVTNNKPFYMLGPLVTDIAPGYDDRVAAIGASVSSAAGADFICYVTPAEHLALPTPEEVYEGVMSSRIAAHVGDMVKLPKTREADLEMGHARRDLDWERQYAVSINAEKARCIRNSRMPADSDACTMCGDFCAIKIVQKTFNF</sequence>
<gene>
    <name evidence="1" type="primary">thiC</name>
    <name type="ordered locus">Mlab_1711</name>
</gene>
<name>THIC_METLZ</name>